<organism>
    <name type="scientific">Homo sapiens</name>
    <name type="common">Human</name>
    <dbReference type="NCBI Taxonomy" id="9606"/>
    <lineage>
        <taxon>Eukaryota</taxon>
        <taxon>Metazoa</taxon>
        <taxon>Chordata</taxon>
        <taxon>Craniata</taxon>
        <taxon>Vertebrata</taxon>
        <taxon>Euteleostomi</taxon>
        <taxon>Mammalia</taxon>
        <taxon>Eutheria</taxon>
        <taxon>Euarchontoglires</taxon>
        <taxon>Primates</taxon>
        <taxon>Haplorrhini</taxon>
        <taxon>Catarrhini</taxon>
        <taxon>Hominidae</taxon>
        <taxon>Homo</taxon>
    </lineage>
</organism>
<protein>
    <recommendedName>
        <fullName>Disintegrin and metalloproteinase domain-containing protein 2</fullName>
        <shortName>ADAM 2</shortName>
    </recommendedName>
    <alternativeName>
        <fullName>Cancer/testis antigen 15</fullName>
        <shortName>CT15</shortName>
    </alternativeName>
    <alternativeName>
        <fullName>Fertilin subunit beta</fullName>
    </alternativeName>
    <alternativeName>
        <fullName>PH-30</fullName>
        <shortName>PH30</shortName>
    </alternativeName>
    <alternativeName>
        <fullName>PH30-beta</fullName>
    </alternativeName>
</protein>
<dbReference type="EMBL" id="U52370">
    <property type="protein sequence ID" value="AAC51110.1"/>
    <property type="molecule type" value="mRNA"/>
</dbReference>
<dbReference type="EMBL" id="U38805">
    <property type="protein sequence ID" value="AAD04206.1"/>
    <property type="molecule type" value="mRNA"/>
</dbReference>
<dbReference type="EMBL" id="X99374">
    <property type="protein sequence ID" value="CAA67753.1"/>
    <property type="molecule type" value="mRNA"/>
</dbReference>
<dbReference type="EMBL" id="AJ133005">
    <property type="protein sequence ID" value="CAB40813.1"/>
    <property type="molecule type" value="mRNA"/>
</dbReference>
<dbReference type="EMBL" id="BC034957">
    <property type="protein sequence ID" value="AAH34957.1"/>
    <property type="molecule type" value="mRNA"/>
</dbReference>
<dbReference type="CCDS" id="CCDS34884.1">
    <molecule id="Q99965-1"/>
</dbReference>
<dbReference type="CCDS" id="CCDS64882.1">
    <molecule id="Q99965-2"/>
</dbReference>
<dbReference type="PIR" id="JC4861">
    <property type="entry name" value="JC4861"/>
</dbReference>
<dbReference type="RefSeq" id="NP_001265042.1">
    <molecule id="Q99965-2"/>
    <property type="nucleotide sequence ID" value="NM_001278113.2"/>
</dbReference>
<dbReference type="RefSeq" id="NP_001265043.1">
    <property type="nucleotide sequence ID" value="NM_001278114.1"/>
</dbReference>
<dbReference type="RefSeq" id="NP_001455.3">
    <molecule id="Q99965-1"/>
    <property type="nucleotide sequence ID" value="NM_001464.4"/>
</dbReference>
<dbReference type="SMR" id="Q99965"/>
<dbReference type="BioGRID" id="108791">
    <property type="interactions" value="13"/>
</dbReference>
<dbReference type="FunCoup" id="Q99965">
    <property type="interactions" value="25"/>
</dbReference>
<dbReference type="IntAct" id="Q99965">
    <property type="interactions" value="7"/>
</dbReference>
<dbReference type="STRING" id="9606.ENSP00000265708"/>
<dbReference type="MEROPS" id="M12.950"/>
<dbReference type="GlyCosmos" id="Q99965">
    <property type="glycosylation" value="5 sites, No reported glycans"/>
</dbReference>
<dbReference type="GlyGen" id="Q99965">
    <property type="glycosylation" value="5 sites, 1 N-linked glycan (1 site)"/>
</dbReference>
<dbReference type="iPTMnet" id="Q99965"/>
<dbReference type="PhosphoSitePlus" id="Q99965"/>
<dbReference type="BioMuta" id="ADAM2"/>
<dbReference type="DMDM" id="28202251"/>
<dbReference type="REPRODUCTION-2DPAGE" id="Q99965"/>
<dbReference type="jPOST" id="Q99965"/>
<dbReference type="MassIVE" id="Q99965"/>
<dbReference type="PaxDb" id="9606-ENSP00000265708"/>
<dbReference type="PeptideAtlas" id="Q99965"/>
<dbReference type="ProteomicsDB" id="78551">
    <molecule id="Q99965-1"/>
</dbReference>
<dbReference type="ProteomicsDB" id="78552">
    <molecule id="Q99965-2"/>
</dbReference>
<dbReference type="Antibodypedia" id="11200">
    <property type="antibodies" value="196 antibodies from 31 providers"/>
</dbReference>
<dbReference type="DNASU" id="2515"/>
<dbReference type="Ensembl" id="ENST00000265708.9">
    <molecule id="Q99965-1"/>
    <property type="protein sequence ID" value="ENSP00000265708.4"/>
    <property type="gene ID" value="ENSG00000104755.16"/>
</dbReference>
<dbReference type="Ensembl" id="ENST00000347580.8">
    <molecule id="Q99965-2"/>
    <property type="protein sequence ID" value="ENSP00000343854.4"/>
    <property type="gene ID" value="ENSG00000104755.16"/>
</dbReference>
<dbReference type="Ensembl" id="ENST00000613160.4">
    <molecule id="Q99965-2"/>
    <property type="protein sequence ID" value="ENSP00000484999.1"/>
    <property type="gene ID" value="ENSG00000276286.4"/>
</dbReference>
<dbReference type="Ensembl" id="ENST00000620181.4">
    <molecule id="Q99965-1"/>
    <property type="protein sequence ID" value="ENSP00000482337.1"/>
    <property type="gene ID" value="ENSG00000276286.4"/>
</dbReference>
<dbReference type="GeneID" id="2515"/>
<dbReference type="KEGG" id="hsa:2515"/>
<dbReference type="MANE-Select" id="ENST00000265708.9">
    <property type="protein sequence ID" value="ENSP00000265708.4"/>
    <property type="RefSeq nucleotide sequence ID" value="NM_001464.5"/>
    <property type="RefSeq protein sequence ID" value="NP_001455.3"/>
</dbReference>
<dbReference type="UCSC" id="uc003xnj.5">
    <molecule id="Q99965-1"/>
    <property type="organism name" value="human"/>
</dbReference>
<dbReference type="AGR" id="HGNC:198"/>
<dbReference type="CTD" id="2515"/>
<dbReference type="DisGeNET" id="2515"/>
<dbReference type="GeneCards" id="ADAM2"/>
<dbReference type="HGNC" id="HGNC:198">
    <property type="gene designation" value="ADAM2"/>
</dbReference>
<dbReference type="HPA" id="ENSG00000104755">
    <property type="expression patterns" value="Tissue enriched (testis)"/>
</dbReference>
<dbReference type="MIM" id="601533">
    <property type="type" value="gene"/>
</dbReference>
<dbReference type="neXtProt" id="NX_Q99965"/>
<dbReference type="OpenTargets" id="ENSG00000104755"/>
<dbReference type="PharmGKB" id="PA24515"/>
<dbReference type="VEuPathDB" id="HostDB:ENSG00000104755"/>
<dbReference type="eggNOG" id="KOG3607">
    <property type="taxonomic scope" value="Eukaryota"/>
</dbReference>
<dbReference type="GeneTree" id="ENSGT00940000161961"/>
<dbReference type="InParanoid" id="Q99965"/>
<dbReference type="OMA" id="NHMGADT"/>
<dbReference type="OrthoDB" id="5951731at2759"/>
<dbReference type="PAN-GO" id="Q99965">
    <property type="GO annotations" value="2 GO annotations based on evolutionary models"/>
</dbReference>
<dbReference type="PhylomeDB" id="Q99965"/>
<dbReference type="TreeFam" id="TF314733"/>
<dbReference type="PathwayCommons" id="Q99965"/>
<dbReference type="Reactome" id="R-HSA-2534343">
    <property type="pathway name" value="Interaction With Cumulus Cells And The Zona Pellucida"/>
</dbReference>
<dbReference type="SignaLink" id="Q99965"/>
<dbReference type="BioGRID-ORCS" id="2515">
    <property type="hits" value="19 hits in 1144 CRISPR screens"/>
</dbReference>
<dbReference type="ChiTaRS" id="ADAM2">
    <property type="organism name" value="human"/>
</dbReference>
<dbReference type="GeneWiki" id="ADAM2"/>
<dbReference type="GenomeRNAi" id="2515"/>
<dbReference type="Pharos" id="Q99965">
    <property type="development level" value="Tbio"/>
</dbReference>
<dbReference type="PRO" id="PR:Q99965"/>
<dbReference type="Proteomes" id="UP000005640">
    <property type="component" value="Chromosome 8"/>
</dbReference>
<dbReference type="RNAct" id="Q99965">
    <property type="molecule type" value="protein"/>
</dbReference>
<dbReference type="Bgee" id="ENSG00000104755">
    <property type="expression patterns" value="Expressed in testis and 28 other cell types or tissues"/>
</dbReference>
<dbReference type="ExpressionAtlas" id="Q99965">
    <property type="expression patterns" value="baseline and differential"/>
</dbReference>
<dbReference type="GO" id="GO:0009986">
    <property type="term" value="C:cell surface"/>
    <property type="evidence" value="ECO:0007669"/>
    <property type="project" value="Ensembl"/>
</dbReference>
<dbReference type="GO" id="GO:0005886">
    <property type="term" value="C:plasma membrane"/>
    <property type="evidence" value="ECO:0000318"/>
    <property type="project" value="GO_Central"/>
</dbReference>
<dbReference type="GO" id="GO:0032991">
    <property type="term" value="C:protein-containing complex"/>
    <property type="evidence" value="ECO:0007669"/>
    <property type="project" value="Ensembl"/>
</dbReference>
<dbReference type="GO" id="GO:0005178">
    <property type="term" value="F:integrin binding"/>
    <property type="evidence" value="ECO:0000304"/>
    <property type="project" value="ProtInc"/>
</dbReference>
<dbReference type="GO" id="GO:0004222">
    <property type="term" value="F:metalloendopeptidase activity"/>
    <property type="evidence" value="ECO:0000318"/>
    <property type="project" value="GO_Central"/>
</dbReference>
<dbReference type="GO" id="GO:0008237">
    <property type="term" value="F:metallopeptidase activity"/>
    <property type="evidence" value="ECO:0000304"/>
    <property type="project" value="ProtInc"/>
</dbReference>
<dbReference type="GO" id="GO:0030534">
    <property type="term" value="P:adult behavior"/>
    <property type="evidence" value="ECO:0007669"/>
    <property type="project" value="Ensembl"/>
</dbReference>
<dbReference type="GO" id="GO:0007339">
    <property type="term" value="P:binding of sperm to zona pellucida"/>
    <property type="evidence" value="ECO:0000318"/>
    <property type="project" value="GO_Central"/>
</dbReference>
<dbReference type="GO" id="GO:0007155">
    <property type="term" value="P:cell adhesion"/>
    <property type="evidence" value="ECO:0000318"/>
    <property type="project" value="GO_Central"/>
</dbReference>
<dbReference type="GO" id="GO:0007342">
    <property type="term" value="P:fusion of sperm to egg plasma membrane involved in single fertilization"/>
    <property type="evidence" value="ECO:0000304"/>
    <property type="project" value="ProtInc"/>
</dbReference>
<dbReference type="GO" id="GO:0010467">
    <property type="term" value="P:gene expression"/>
    <property type="evidence" value="ECO:0007669"/>
    <property type="project" value="Ensembl"/>
</dbReference>
<dbReference type="GO" id="GO:0008584">
    <property type="term" value="P:male gonad development"/>
    <property type="evidence" value="ECO:0000318"/>
    <property type="project" value="GO_Central"/>
</dbReference>
<dbReference type="GO" id="GO:0010628">
    <property type="term" value="P:positive regulation of gene expression"/>
    <property type="evidence" value="ECO:0007669"/>
    <property type="project" value="Ensembl"/>
</dbReference>
<dbReference type="GO" id="GO:0006508">
    <property type="term" value="P:proteolysis"/>
    <property type="evidence" value="ECO:0000318"/>
    <property type="project" value="GO_Central"/>
</dbReference>
<dbReference type="GO" id="GO:0008542">
    <property type="term" value="P:visual learning"/>
    <property type="evidence" value="ECO:0007669"/>
    <property type="project" value="Ensembl"/>
</dbReference>
<dbReference type="CDD" id="cd04269">
    <property type="entry name" value="ZnMc_adamalysin_II_like"/>
    <property type="match status" value="1"/>
</dbReference>
<dbReference type="FunFam" id="3.40.390.10:FF:000033">
    <property type="entry name" value="A disintegrin and metallopeptidase domain 18"/>
    <property type="match status" value="1"/>
</dbReference>
<dbReference type="FunFam" id="4.10.70.10:FF:000001">
    <property type="entry name" value="Disintegrin and metalloproteinase domain-containing protein 22"/>
    <property type="match status" value="1"/>
</dbReference>
<dbReference type="Gene3D" id="3.40.390.10">
    <property type="entry name" value="Collagenase (Catalytic Domain)"/>
    <property type="match status" value="1"/>
</dbReference>
<dbReference type="Gene3D" id="4.10.70.10">
    <property type="entry name" value="Disintegrin domain"/>
    <property type="match status" value="1"/>
</dbReference>
<dbReference type="InterPro" id="IPR006586">
    <property type="entry name" value="ADAM_Cys-rich"/>
</dbReference>
<dbReference type="InterPro" id="IPR018358">
    <property type="entry name" value="Disintegrin_CS"/>
</dbReference>
<dbReference type="InterPro" id="IPR001762">
    <property type="entry name" value="Disintegrin_dom"/>
</dbReference>
<dbReference type="InterPro" id="IPR036436">
    <property type="entry name" value="Disintegrin_dom_sf"/>
</dbReference>
<dbReference type="InterPro" id="IPR024079">
    <property type="entry name" value="MetalloPept_cat_dom_sf"/>
</dbReference>
<dbReference type="InterPro" id="IPR001590">
    <property type="entry name" value="Peptidase_M12B"/>
</dbReference>
<dbReference type="InterPro" id="IPR002870">
    <property type="entry name" value="Peptidase_M12B_N"/>
</dbReference>
<dbReference type="InterPro" id="IPR034027">
    <property type="entry name" value="Reprolysin_adamalysin"/>
</dbReference>
<dbReference type="PANTHER" id="PTHR11905">
    <property type="entry name" value="ADAM A DISINTEGRIN AND METALLOPROTEASE DOMAIN"/>
    <property type="match status" value="1"/>
</dbReference>
<dbReference type="PANTHER" id="PTHR11905:SF108">
    <property type="entry name" value="DISINTEGRIN AND METALLOPROTEINASE DOMAIN-CONTAINING PROTEIN 2"/>
    <property type="match status" value="1"/>
</dbReference>
<dbReference type="Pfam" id="PF08516">
    <property type="entry name" value="ADAM_CR"/>
    <property type="match status" value="1"/>
</dbReference>
<dbReference type="Pfam" id="PF00200">
    <property type="entry name" value="Disintegrin"/>
    <property type="match status" value="1"/>
</dbReference>
<dbReference type="Pfam" id="PF01562">
    <property type="entry name" value="Pep_M12B_propep"/>
    <property type="match status" value="1"/>
</dbReference>
<dbReference type="Pfam" id="PF01421">
    <property type="entry name" value="Reprolysin"/>
    <property type="match status" value="1"/>
</dbReference>
<dbReference type="PRINTS" id="PR00289">
    <property type="entry name" value="DISINTEGRIN"/>
</dbReference>
<dbReference type="SMART" id="SM00608">
    <property type="entry name" value="ACR"/>
    <property type="match status" value="1"/>
</dbReference>
<dbReference type="SMART" id="SM00050">
    <property type="entry name" value="DISIN"/>
    <property type="match status" value="1"/>
</dbReference>
<dbReference type="SUPFAM" id="SSF57552">
    <property type="entry name" value="Blood coagulation inhibitor (disintegrin)"/>
    <property type="match status" value="1"/>
</dbReference>
<dbReference type="SUPFAM" id="SSF55486">
    <property type="entry name" value="Metalloproteases ('zincins'), catalytic domain"/>
    <property type="match status" value="1"/>
</dbReference>
<dbReference type="PROSITE" id="PS50215">
    <property type="entry name" value="ADAM_MEPRO"/>
    <property type="match status" value="1"/>
</dbReference>
<dbReference type="PROSITE" id="PS00427">
    <property type="entry name" value="DISINTEGRIN_1"/>
    <property type="match status" value="1"/>
</dbReference>
<dbReference type="PROSITE" id="PS50214">
    <property type="entry name" value="DISINTEGRIN_2"/>
    <property type="match status" value="1"/>
</dbReference>
<feature type="signal peptide" evidence="3">
    <location>
        <begin position="1"/>
        <end position="16"/>
    </location>
</feature>
<feature type="propeptide" id="PRO_0000029042">
    <location>
        <begin position="17"/>
        <end position="174"/>
    </location>
</feature>
<feature type="chain" id="PRO_0000029043" description="Disintegrin and metalloproteinase domain-containing protein 2">
    <location>
        <begin position="175"/>
        <end position="735"/>
    </location>
</feature>
<feature type="topological domain" description="Extracellular" evidence="3">
    <location>
        <begin position="175"/>
        <end position="686"/>
    </location>
</feature>
<feature type="transmembrane region" description="Helical" evidence="3">
    <location>
        <begin position="687"/>
        <end position="707"/>
    </location>
</feature>
<feature type="topological domain" description="Cytoplasmic" evidence="3">
    <location>
        <begin position="708"/>
        <end position="735"/>
    </location>
</feature>
<feature type="domain" description="Peptidase M12B" evidence="5">
    <location>
        <begin position="178"/>
        <end position="375"/>
    </location>
</feature>
<feature type="domain" description="Disintegrin" evidence="4">
    <location>
        <begin position="384"/>
        <end position="473"/>
    </location>
</feature>
<feature type="domain" description="EGF-like">
    <location>
        <begin position="612"/>
        <end position="645"/>
    </location>
</feature>
<feature type="modified residue" description="Phosphoserine" evidence="2">
    <location>
        <position position="729"/>
    </location>
</feature>
<feature type="glycosylation site" description="N-linked (GlcNAc...) asparagine" evidence="3">
    <location>
        <position position="122"/>
    </location>
</feature>
<feature type="glycosylation site" description="N-linked (GlcNAc...) asparagine" evidence="3">
    <location>
        <position position="220"/>
    </location>
</feature>
<feature type="glycosylation site" description="N-linked (GlcNAc...) asparagine" evidence="3">
    <location>
        <position position="353"/>
    </location>
</feature>
<feature type="glycosylation site" description="N-linked (GlcNAc...) asparagine" evidence="3">
    <location>
        <position position="459"/>
    </location>
</feature>
<feature type="glycosylation site" description="N-linked (GlcNAc...) asparagine" evidence="3">
    <location>
        <position position="566"/>
    </location>
</feature>
<feature type="disulfide bond" evidence="1">
    <location>
        <begin position="287"/>
        <end position="370"/>
    </location>
</feature>
<feature type="disulfide bond" evidence="1">
    <location>
        <begin position="329"/>
        <end position="354"/>
    </location>
</feature>
<feature type="disulfide bond" evidence="1">
    <location>
        <begin position="331"/>
        <end position="336"/>
    </location>
</feature>
<feature type="disulfide bond" evidence="1">
    <location>
        <begin position="445"/>
        <end position="465"/>
    </location>
</feature>
<feature type="disulfide bond" evidence="1">
    <location>
        <begin position="616"/>
        <end position="627"/>
    </location>
</feature>
<feature type="disulfide bond" evidence="1">
    <location>
        <begin position="621"/>
        <end position="633"/>
    </location>
</feature>
<feature type="disulfide bond" evidence="1">
    <location>
        <begin position="635"/>
        <end position="644"/>
    </location>
</feature>
<feature type="splice variant" id="VSP_005471" description="In isoform 2." evidence="6">
    <location>
        <begin position="172"/>
        <end position="190"/>
    </location>
</feature>
<feature type="sequence variant" id="VAR_035217" description="In dbSNP:rs34800519.">
    <original>G</original>
    <variation>W</variation>
    <location>
        <position position="10"/>
    </location>
</feature>
<feature type="sequence conflict" description="In Ref. 2; AAD04206." evidence="7" ref="2">
    <location>
        <position position="3"/>
    </location>
</feature>
<feature type="sequence conflict" description="In Ref. 3; CAA67753." evidence="7" ref="3">
    <original>D</original>
    <variation>H</variation>
    <location>
        <position position="21"/>
    </location>
</feature>
<feature type="sequence conflict" description="In Ref. 3; CAA67753." evidence="7" ref="3">
    <original>E</original>
    <variation>D</variation>
    <location>
        <position position="99"/>
    </location>
</feature>
<feature type="sequence conflict" description="In Ref. 3; CAA67753." evidence="7" ref="3">
    <original>V</original>
    <variation>G</variation>
    <location>
        <position position="106"/>
    </location>
</feature>
<feature type="sequence conflict" description="In Ref. 2; AAD04206." evidence="7" ref="2">
    <original>V</original>
    <variation>A</variation>
    <location>
        <position position="170"/>
    </location>
</feature>
<feature type="sequence conflict" description="In Ref. 1; AAC51110." evidence="7" ref="1">
    <original>D</original>
    <variation>H</variation>
    <location>
        <position position="288"/>
    </location>
</feature>
<feature type="sequence conflict" description="In Ref. 1; AAC51110." evidence="7" ref="1">
    <original>I</original>
    <variation>T</variation>
    <location>
        <position position="321"/>
    </location>
</feature>
<feature type="sequence conflict" description="In Ref. 3; CAA67753." evidence="7" ref="3">
    <original>G</original>
    <variation>S</variation>
    <location>
        <position position="388"/>
    </location>
</feature>
<feature type="sequence conflict" description="In Ref. 3; CAA67753." evidence="7" ref="3">
    <original>EEC</original>
    <variation>DEF</variation>
    <location>
        <begin position="396"/>
        <end position="398"/>
    </location>
</feature>
<feature type="sequence conflict" description="In Ref. 3; CAA67753." evidence="7" ref="3">
    <original>G</original>
    <variation>S</variation>
    <location>
        <position position="501"/>
    </location>
</feature>
<feature type="sequence conflict" description="In Ref. 3; CAA67753." evidence="7" ref="3">
    <original>D</original>
    <variation>Y</variation>
    <location>
        <position position="529"/>
    </location>
</feature>
<feature type="sequence conflict" description="In Ref. 3; CAA67753." evidence="7" ref="3">
    <original>S</original>
    <variation>G</variation>
    <location>
        <position position="579"/>
    </location>
</feature>
<feature type="sequence conflict" description="In Ref. 3; CAA67753." evidence="7" ref="3">
    <original>W</original>
    <variation>L</variation>
    <location>
        <position position="588"/>
    </location>
</feature>
<feature type="sequence conflict" description="In Ref. 3; CAA67753." evidence="7" ref="3">
    <original>N</original>
    <variation>D</variation>
    <location>
        <position position="603"/>
    </location>
</feature>
<feature type="sequence conflict" description="In Ref. 3; CAA67753." evidence="7" ref="3">
    <original>NK</original>
    <variation>KQ</variation>
    <location>
        <begin position="629"/>
        <end position="630"/>
    </location>
</feature>
<feature type="sequence conflict" description="In Ref. 3; CAA67753." evidence="7" ref="3">
    <original>S</original>
    <variation>F</variation>
    <location>
        <position position="638"/>
    </location>
</feature>
<evidence type="ECO:0000250" key="1"/>
<evidence type="ECO:0000250" key="2">
    <source>
        <dbReference type="UniProtKB" id="Q60718"/>
    </source>
</evidence>
<evidence type="ECO:0000255" key="3"/>
<evidence type="ECO:0000255" key="4">
    <source>
        <dbReference type="PROSITE-ProRule" id="PRU00068"/>
    </source>
</evidence>
<evidence type="ECO:0000255" key="5">
    <source>
        <dbReference type="PROSITE-ProRule" id="PRU00276"/>
    </source>
</evidence>
<evidence type="ECO:0000303" key="6">
    <source>
    </source>
</evidence>
<evidence type="ECO:0000305" key="7"/>
<reference key="1">
    <citation type="journal article" date="1997" name="Mol. Reprod. Dev.">
        <title>Human fertilin beta: identification, characterization, and chromosomal mapping of an ADAM gene family member.</title>
        <authorList>
            <person name="Vidaeus C.M."/>
            <person name="von Kap-Herr C."/>
            <person name="Golden W.L."/>
            <person name="Eddy R.L."/>
            <person name="Shows T.B."/>
            <person name="Herr J.C."/>
        </authorList>
    </citation>
    <scope>NUCLEOTIDE SEQUENCE [MRNA] (ISOFORM 1)</scope>
    <source>
        <tissue>Testis</tissue>
    </source>
</reference>
<reference key="2">
    <citation type="journal article" date="1996" name="Biochem. Biophys. Res. Commun.">
        <title>Molecular cloning of the human fertilin beta subunit.</title>
        <authorList>
            <person name="Gupta S.K."/>
            <person name="Alves K."/>
            <person name="Palladino L.O."/>
            <person name="Mark G.E."/>
            <person name="Hollis G.F."/>
        </authorList>
    </citation>
    <scope>NUCLEOTIDE SEQUENCE [MRNA] (ISOFORM 1)</scope>
    <source>
        <tissue>Testis</tissue>
    </source>
</reference>
<reference key="3">
    <citation type="journal article" date="1997" name="Genomics">
        <title>Mapping, sequence, and expression analysis of the human fertilin beta gene (FTNB).</title>
        <authorList>
            <person name="Burkin H.R."/>
            <person name="Burkin D.J."/>
            <person name="Davey P.M."/>
            <person name="Griffin D.K."/>
            <person name="Affara N.A."/>
        </authorList>
    </citation>
    <scope>NUCLEOTIDE SEQUENCE [MRNA] (ISOFORM 1)</scope>
    <source>
        <tissue>Testis</tissue>
    </source>
</reference>
<reference key="4">
    <citation type="submission" date="1999-04" db="EMBL/GenBank/DDBJ databases">
        <title>Nucleotide sequence of the human fertilin beta transcript.</title>
        <authorList>
            <person name="Hall L."/>
            <person name="Frayne J."/>
        </authorList>
    </citation>
    <scope>NUCLEOTIDE SEQUENCE [MRNA] (ISOFORM 1)</scope>
    <source>
        <tissue>Testis</tissue>
    </source>
</reference>
<reference key="5">
    <citation type="journal article" date="2004" name="Genome Res.">
        <title>The status, quality, and expansion of the NIH full-length cDNA project: the Mammalian Gene Collection (MGC).</title>
        <authorList>
            <consortium name="The MGC Project Team"/>
        </authorList>
    </citation>
    <scope>NUCLEOTIDE SEQUENCE [LARGE SCALE MRNA] (ISOFORM 2)</scope>
    <source>
        <tissue>Testis</tissue>
    </source>
</reference>
<comment type="function">
    <text>Sperm surface membrane protein that may be involved in sperm-egg plasma membrane adhesion and fusion during fertilization. Could have a direct role in sperm-zona binding or migration of sperm from the uterus into the oviduct. Interactions with egg membrane could be mediated via binding between its disintegrin-like domain to one or more integrins receptors on the egg. This is a non catalytic metalloprotease-like protein.</text>
</comment>
<comment type="subcellular location">
    <subcellularLocation>
        <location>Membrane</location>
        <topology>Single-pass type I membrane protein</topology>
    </subcellularLocation>
</comment>
<comment type="alternative products">
    <event type="alternative splicing"/>
    <isoform>
        <id>Q99965-1</id>
        <name>1</name>
        <sequence type="displayed"/>
    </isoform>
    <isoform>
        <id>Q99965-2</id>
        <name>2</name>
        <sequence type="described" ref="VSP_005471"/>
    </isoform>
</comment>
<comment type="tissue specificity">
    <text>Expressed specifically in spermatogenic cells in the seminiferous cells. Not detected in fetal tissues.</text>
</comment>
<comment type="domain">
    <text>A tripeptide motif (FEE) within disintegrin-like domain could be involved in the binding to egg integrin receptor and thus could mediate sperm/egg binding.</text>
</comment>
<comment type="PTM">
    <text>The prodomain and the metalloprotease domain are cleaved during the epididymal maturation of the spermatozoa.</text>
</comment>
<comment type="miscellaneous">
    <text>In mammals, exists as a heterodimer composed of an alpha and beta subunits. In human, fertilin subunit alpha is a pseudogene.</text>
</comment>
<name>ADAM2_HUMAN</name>
<keyword id="KW-0025">Alternative splicing</keyword>
<keyword id="KW-0130">Cell adhesion</keyword>
<keyword id="KW-1015">Disulfide bond</keyword>
<keyword id="KW-0245">EGF-like domain</keyword>
<keyword id="KW-0325">Glycoprotein</keyword>
<keyword id="KW-0472">Membrane</keyword>
<keyword id="KW-0597">Phosphoprotein</keyword>
<keyword id="KW-1267">Proteomics identification</keyword>
<keyword id="KW-1185">Reference proteome</keyword>
<keyword id="KW-0732">Signal</keyword>
<keyword id="KW-0812">Transmembrane</keyword>
<keyword id="KW-1133">Transmembrane helix</keyword>
<proteinExistence type="evidence at protein level"/>
<accession>Q99965</accession>
<accession>P78326</accession>
<accession>Q9UQQ8</accession>
<sequence length="735" mass="82457">MWRVLFLLSGLGGLRMDSNFDSLPVQITVPEKIRSIIKEGIESQASYKIVIEGKPYTVNLMQKNFLPHNFRVYSYSGTGIMKPLDQDFQNFCHYQGYIEGYPKSVVMVSTCTGLRGVLQFENVSYGIEPLESSVGFEHVIYQVKHKKADVSLYNEKDIESRDLSFKLQSVEPQQDFAKYIEMHVIVEKQLYNHMGSDTTVVAQKVFQLIGLTNAIFVSFNITIILSSLELWIDENKIATTGEANELLHTFLRWKTSYLVLRPHDVAFLLVYREKSNYVGATFQGKMCDANYAGGVVLHPRTISLESLAVILAQLLSLSMGITYDDINKCQCSGAVCIMNPEAIHFSGVKIFSNCSFEDFAHFISKQKSQCLHNQPRLDPFFKQQAVCGNAKLEAGEECDCGTEQDCALIGETCCDIATCRFKAGSNCAEGPCCENCLFMSKERMCRPSFEECDLPEYCNGSSASCPENHYVQTGHPCGLNQWICIDGVCMSGDKQCTDTFGKEVEFGPSECYSHLNSKTDVSGNCGISDSGYTQCEADNLQCGKLICKYVGKFLLQIPRATIIYANISGHLCIAVEFASDHADSQKMWIKDGTSCGSNKVCRNQRCVSSSYLGYDCTTDKCNDRGVCNNKKHCHCSASYLPPDCSVQSDLWPGGSIDSGNFPPVAIPARLPERRYIENIYHSKPMRWPFFLFIPFFIIFCVLIAIMVKVNFQRKKWRTEDYSSDEQPESESEPKG</sequence>
<gene>
    <name type="primary">ADAM2</name>
    <name type="synonym">FTNB</name>
</gene>